<organism>
    <name type="scientific">Acinetobacter baylyi (strain ATCC 33305 / BD413 / ADP1)</name>
    <dbReference type="NCBI Taxonomy" id="62977"/>
    <lineage>
        <taxon>Bacteria</taxon>
        <taxon>Pseudomonadati</taxon>
        <taxon>Pseudomonadota</taxon>
        <taxon>Gammaproteobacteria</taxon>
        <taxon>Moraxellales</taxon>
        <taxon>Moraxellaceae</taxon>
        <taxon>Acinetobacter</taxon>
    </lineage>
</organism>
<name>ANTDA_ACIAD</name>
<reference evidence="9 10" key="1">
    <citation type="journal article" date="1998" name="J. Bacteriol.">
        <title>Similarities between the antABC-encoded anthranilate dioxygenase and the benABC-encoded benzoate dioxygenase of Acinetobacter sp. strain ADP1.</title>
        <authorList>
            <person name="Bundy B.M."/>
            <person name="Campbell A.L."/>
            <person name="Neidle E.L."/>
        </authorList>
    </citation>
    <scope>NUCLEOTIDE SEQUENCE [GENOMIC DNA]</scope>
    <scope>INDUCTION</scope>
    <source>
        <strain>ATCC 33305 / BD413 / ADP1</strain>
    </source>
</reference>
<reference evidence="11" key="2">
    <citation type="journal article" date="2004" name="Nucleic Acids Res.">
        <title>Unique features revealed by the genome sequence of Acinetobacter sp. ADP1, a versatile and naturally transformation competent bacterium.</title>
        <authorList>
            <person name="Barbe V."/>
            <person name="Vallenet D."/>
            <person name="Fonknechten N."/>
            <person name="Kreimeyer A."/>
            <person name="Oztas S."/>
            <person name="Labarre L."/>
            <person name="Cruveiller S."/>
            <person name="Robert C."/>
            <person name="Duprat S."/>
            <person name="Wincker P."/>
            <person name="Ornston L.N."/>
            <person name="Weissenbach J."/>
            <person name="Marliere P."/>
            <person name="Cohen G.N."/>
            <person name="Medigue C."/>
        </authorList>
    </citation>
    <scope>NUCLEOTIDE SEQUENCE [LARGE SCALE GENOMIC DNA]</scope>
    <source>
        <strain>ATCC 33305 / BD413 / ADP1</strain>
    </source>
</reference>
<reference evidence="9" key="3">
    <citation type="journal article" date="2001" name="J. Bacteriol.">
        <title>Characterization and evolution of anthranilate 1,2-dioxygenase from Acinetobacter sp. strain ADP1.</title>
        <authorList>
            <person name="Eby D.M."/>
            <person name="Beharry Z.M."/>
            <person name="Coulter E.D."/>
            <person name="Kurtz D.M. Jr."/>
            <person name="Neidle E.L."/>
        </authorList>
    </citation>
    <scope>FUNCTION</scope>
    <scope>CATALYTIC ACTIVITY</scope>
    <scope>COFACTOR</scope>
    <scope>BIOPHYSICOCHEMICAL PROPERTIES</scope>
    <scope>PATHWAY</scope>
    <scope>SUBUNIT</scope>
    <scope>MUTAGENESIS OF MET-43</scope>
    <source>
        <strain>ATCC 33305 / BD413 / ADP1</strain>
    </source>
</reference>
<reference evidence="9" key="4">
    <citation type="journal article" date="2003" name="Biochemistry">
        <title>Histidine ligand protonation and redox potential in the Rieske dioxygenases: role of a conserved aspartate in anthranilate 1,2-dioxygenase.</title>
        <authorList>
            <person name="Beharry Z.M."/>
            <person name="Eby D.M."/>
            <person name="Coulter E.D."/>
            <person name="Viswanathan R."/>
            <person name="Neidle E.L."/>
            <person name="Phillips R.S."/>
            <person name="Kurtz D.M. Jr."/>
        </authorList>
    </citation>
    <scope>BIOPHYSICOCHEMICAL PROPERTIES</scope>
    <scope>MUTAGENESIS OF ASP-217</scope>
</reference>
<feature type="chain" id="PRO_0000415157" description="Anthranilate 1,2-dioxygenase large subunit">
    <location>
        <begin position="1"/>
        <end position="471"/>
    </location>
</feature>
<feature type="domain" description="Rieske" evidence="4">
    <location>
        <begin position="52"/>
        <end position="160"/>
    </location>
</feature>
<feature type="binding site" evidence="2 4">
    <location>
        <position position="93"/>
    </location>
    <ligand>
        <name>[2Fe-2S] cluster</name>
        <dbReference type="ChEBI" id="CHEBI:190135"/>
    </ligand>
</feature>
<feature type="binding site" evidence="2 4">
    <location>
        <position position="95"/>
    </location>
    <ligand>
        <name>[2Fe-2S] cluster</name>
        <dbReference type="ChEBI" id="CHEBI:190135"/>
    </ligand>
</feature>
<feature type="binding site" evidence="2 4">
    <location>
        <position position="113"/>
    </location>
    <ligand>
        <name>[2Fe-2S] cluster</name>
        <dbReference type="ChEBI" id="CHEBI:190135"/>
    </ligand>
</feature>
<feature type="binding site" evidence="2 4">
    <location>
        <position position="116"/>
    </location>
    <ligand>
        <name>[2Fe-2S] cluster</name>
        <dbReference type="ChEBI" id="CHEBI:190135"/>
    </ligand>
</feature>
<feature type="binding site" evidence="2">
    <location>
        <position position="220"/>
    </location>
    <ligand>
        <name>Fe cation</name>
        <dbReference type="ChEBI" id="CHEBI:24875"/>
    </ligand>
</feature>
<feature type="binding site" evidence="1">
    <location>
        <position position="225"/>
    </location>
    <ligand>
        <name>Fe cation</name>
        <dbReference type="ChEBI" id="CHEBI:24875"/>
    </ligand>
</feature>
<feature type="binding site" evidence="2">
    <location>
        <position position="379"/>
    </location>
    <ligand>
        <name>Fe cation</name>
        <dbReference type="ChEBI" id="CHEBI:24875"/>
    </ligand>
</feature>
<feature type="mutagenesis site" description="Prevents anthranilate degradation." evidence="5">
    <original>M</original>
    <variation>K</variation>
    <location>
        <position position="43"/>
    </location>
</feature>
<feature type="mutagenesis site" description="In ACN476; loss of dioxygenase activity and 2-fold lower redox potential." evidence="6">
    <original>D</original>
    <variation>A</variation>
    <location>
        <position position="217"/>
    </location>
</feature>
<feature type="mutagenesis site" description="Loss of dioxygenase activity and lack of iron at the mononuclear site." evidence="6">
    <original>D</original>
    <variation>E</variation>
    <location>
        <position position="217"/>
    </location>
</feature>
<feature type="mutagenesis site" description="Loss of dioxygenase activity." evidence="6">
    <original>D</original>
    <variation>N</variation>
    <location>
        <position position="217"/>
    </location>
</feature>
<comment type="function">
    <text evidence="5">Component of anthranilate dioxygenase multicomponent enzyme system which catalyzes the incorporation of both atoms of molecular oxygen into anthranilate to form catechol.</text>
</comment>
<comment type="catalytic activity">
    <reaction evidence="5">
        <text>anthranilate + NADH + O2 + 3 H(+) = catechol + NH4(+) + CO2 + NAD(+)</text>
        <dbReference type="Rhea" id="RHEA:11076"/>
        <dbReference type="ChEBI" id="CHEBI:15378"/>
        <dbReference type="ChEBI" id="CHEBI:15379"/>
        <dbReference type="ChEBI" id="CHEBI:16526"/>
        <dbReference type="ChEBI" id="CHEBI:16567"/>
        <dbReference type="ChEBI" id="CHEBI:18135"/>
        <dbReference type="ChEBI" id="CHEBI:28938"/>
        <dbReference type="ChEBI" id="CHEBI:57540"/>
        <dbReference type="ChEBI" id="CHEBI:57945"/>
        <dbReference type="EC" id="1.14.12.1"/>
    </reaction>
</comment>
<comment type="catalytic activity">
    <reaction evidence="5">
        <text>anthranilate + NADPH + O2 + 3 H(+) = catechol + NH4(+) + CO2 + NADP(+)</text>
        <dbReference type="Rhea" id="RHEA:11072"/>
        <dbReference type="ChEBI" id="CHEBI:15378"/>
        <dbReference type="ChEBI" id="CHEBI:15379"/>
        <dbReference type="ChEBI" id="CHEBI:16526"/>
        <dbReference type="ChEBI" id="CHEBI:16567"/>
        <dbReference type="ChEBI" id="CHEBI:18135"/>
        <dbReference type="ChEBI" id="CHEBI:28938"/>
        <dbReference type="ChEBI" id="CHEBI:57783"/>
        <dbReference type="ChEBI" id="CHEBI:58349"/>
        <dbReference type="EC" id="1.14.12.1"/>
    </reaction>
</comment>
<comment type="cofactor">
    <cofactor evidence="5">
        <name>Fe cation</name>
        <dbReference type="ChEBI" id="CHEBI:24875"/>
    </cofactor>
    <text evidence="5">Binds 1 Fe cation per subunit.</text>
</comment>
<comment type="cofactor">
    <cofactor evidence="4 5">
        <name>[2Fe-2S] cluster</name>
        <dbReference type="ChEBI" id="CHEBI:190135"/>
    </cofactor>
    <text evidence="4 5">Binds 1 [2Fe-2S] cluster per subunit.</text>
</comment>
<comment type="biophysicochemical properties">
    <kinetics>
        <KM evidence="5 6">1 uM for anthranilate</KM>
        <KM evidence="5 6">12 uM for benzoate</KM>
        <text>KM values measured using the AntAB complex.</text>
    </kinetics>
    <phDependence>
        <text evidence="5 6">Optimum pH is 6.3 for the reverse reaction.</text>
    </phDependence>
    <redoxPotential>
        <text evidence="5 6">E(0) is -86 +/-10 mV for Rieske center at pH 7.0.</text>
    </redoxPotential>
</comment>
<comment type="pathway">
    <text evidence="5">Aromatic compound metabolism; anthranilate degradation via hydroxylation; catechol from anthranilate: step 1/1.</text>
</comment>
<comment type="subunit">
    <text evidence="5">The anthranilate dioxygenase (AntDO) multicomponent enzyme system is composed of an oxygenase component and a NADH:acceptor reductase component (AntC). The oxygenase component is a heterohexamer of 3 large (AntA) and 3 small (AntB) subunits.</text>
</comment>
<comment type="induction">
    <text evidence="7">By anthranilate.</text>
</comment>
<comment type="similarity">
    <text evidence="3">Belongs to the bacterial ring-hydroxylating dioxygenase alpha subunit family.</text>
</comment>
<keyword id="KW-0001">2Fe-2S</keyword>
<keyword id="KW-0058">Aromatic hydrocarbons catabolism</keyword>
<keyword id="KW-0223">Dioxygenase</keyword>
<keyword id="KW-0408">Iron</keyword>
<keyword id="KW-0411">Iron-sulfur</keyword>
<keyword id="KW-0479">Metal-binding</keyword>
<keyword id="KW-0520">NAD</keyword>
<keyword id="KW-0560">Oxidoreductase</keyword>
<protein>
    <recommendedName>
        <fullName evidence="8">Anthranilate 1,2-dioxygenase large subunit</fullName>
        <ecNumber evidence="5">1.14.12.1</ecNumber>
    </recommendedName>
</protein>
<evidence type="ECO:0000250" key="1"/>
<evidence type="ECO:0000250" key="2">
    <source>
        <dbReference type="UniProtKB" id="P0A110"/>
    </source>
</evidence>
<evidence type="ECO:0000255" key="3"/>
<evidence type="ECO:0000255" key="4">
    <source>
        <dbReference type="PROSITE-ProRule" id="PRU00628"/>
    </source>
</evidence>
<evidence type="ECO:0000269" key="5">
    <source>
    </source>
</evidence>
<evidence type="ECO:0000269" key="6">
    <source>
    </source>
</evidence>
<evidence type="ECO:0000269" key="7">
    <source>
    </source>
</evidence>
<evidence type="ECO:0000303" key="8">
    <source>
    </source>
</evidence>
<evidence type="ECO:0000305" key="9"/>
<evidence type="ECO:0000312" key="10">
    <source>
        <dbReference type="EMBL" id="AAC34813.1"/>
    </source>
</evidence>
<evidence type="ECO:0000312" key="11">
    <source>
        <dbReference type="EMBL" id="CAG69424.1"/>
    </source>
</evidence>
<dbReference type="EC" id="1.14.12.1" evidence="5"/>
<dbReference type="EMBL" id="AF071556">
    <property type="protein sequence ID" value="AAC34813.1"/>
    <property type="molecule type" value="Genomic_DNA"/>
</dbReference>
<dbReference type="EMBL" id="CR543861">
    <property type="protein sequence ID" value="CAG69424.1"/>
    <property type="molecule type" value="Genomic_DNA"/>
</dbReference>
<dbReference type="RefSeq" id="WP_004928945.1">
    <property type="nucleotide sequence ID" value="NC_005966.1"/>
</dbReference>
<dbReference type="SMR" id="O85673"/>
<dbReference type="STRING" id="202950.GCA_001485005_02315"/>
<dbReference type="GeneID" id="45234944"/>
<dbReference type="KEGG" id="aci:ACIAD2669"/>
<dbReference type="eggNOG" id="COG4638">
    <property type="taxonomic scope" value="Bacteria"/>
</dbReference>
<dbReference type="HOGENOM" id="CLU_026244_4_1_6"/>
<dbReference type="OrthoDB" id="9769355at2"/>
<dbReference type="BioCyc" id="ASP62977:ACIAD_RS12135-MONOMER"/>
<dbReference type="BioCyc" id="MetaCyc:MONOMER-7505"/>
<dbReference type="UniPathway" id="UPA01016">
    <property type="reaction ID" value="UER01026"/>
</dbReference>
<dbReference type="Proteomes" id="UP000000430">
    <property type="component" value="Chromosome"/>
</dbReference>
<dbReference type="GO" id="GO:0051537">
    <property type="term" value="F:2 iron, 2 sulfur cluster binding"/>
    <property type="evidence" value="ECO:0007669"/>
    <property type="project" value="UniProtKB-KW"/>
</dbReference>
<dbReference type="GO" id="GO:0018618">
    <property type="term" value="F:anthranilate 1,2-dioxygenase (deaminating, decarboxylating) activity"/>
    <property type="evidence" value="ECO:0007669"/>
    <property type="project" value="UniProtKB-EC"/>
</dbReference>
<dbReference type="GO" id="GO:0005506">
    <property type="term" value="F:iron ion binding"/>
    <property type="evidence" value="ECO:0007669"/>
    <property type="project" value="InterPro"/>
</dbReference>
<dbReference type="GO" id="GO:0009056">
    <property type="term" value="P:catabolic process"/>
    <property type="evidence" value="ECO:0007669"/>
    <property type="project" value="UniProtKB-KW"/>
</dbReference>
<dbReference type="CDD" id="cd08879">
    <property type="entry name" value="RHO_alpha_C_AntDO-like"/>
    <property type="match status" value="1"/>
</dbReference>
<dbReference type="CDD" id="cd03469">
    <property type="entry name" value="Rieske_RO_Alpha_N"/>
    <property type="match status" value="1"/>
</dbReference>
<dbReference type="Gene3D" id="3.90.380.10">
    <property type="entry name" value="Naphthalene 1,2-dioxygenase Alpha Subunit, Chain A, domain 1"/>
    <property type="match status" value="1"/>
</dbReference>
<dbReference type="Gene3D" id="2.102.10.10">
    <property type="entry name" value="Rieske [2Fe-2S] iron-sulphur domain"/>
    <property type="match status" value="1"/>
</dbReference>
<dbReference type="InterPro" id="IPR017638">
    <property type="entry name" value="Anthranilate_1-2-diOase_lsu"/>
</dbReference>
<dbReference type="InterPro" id="IPR017941">
    <property type="entry name" value="Rieske_2Fe-2S"/>
</dbReference>
<dbReference type="InterPro" id="IPR036922">
    <property type="entry name" value="Rieske_2Fe-2S_sf"/>
</dbReference>
<dbReference type="InterPro" id="IPR015881">
    <property type="entry name" value="Ring-hydroxy_dOase_2Fe2S_BS"/>
</dbReference>
<dbReference type="InterPro" id="IPR015879">
    <property type="entry name" value="Ring_hydroxy_dOase_asu_C_dom"/>
</dbReference>
<dbReference type="InterPro" id="IPR001663">
    <property type="entry name" value="Rng_hydr_dOase-A"/>
</dbReference>
<dbReference type="NCBIfam" id="TIGR03228">
    <property type="entry name" value="anthran_1_2_A"/>
    <property type="match status" value="1"/>
</dbReference>
<dbReference type="PANTHER" id="PTHR43756:SF1">
    <property type="entry name" value="3-PHENYLPROPIONATE_CINNAMIC ACID DIOXYGENASE SUBUNIT ALPHA"/>
    <property type="match status" value="1"/>
</dbReference>
<dbReference type="PANTHER" id="PTHR43756">
    <property type="entry name" value="CHOLINE MONOOXYGENASE, CHLOROPLASTIC"/>
    <property type="match status" value="1"/>
</dbReference>
<dbReference type="Pfam" id="PF00355">
    <property type="entry name" value="Rieske"/>
    <property type="match status" value="1"/>
</dbReference>
<dbReference type="Pfam" id="PF00848">
    <property type="entry name" value="Ring_hydroxyl_A"/>
    <property type="match status" value="1"/>
</dbReference>
<dbReference type="PRINTS" id="PR00090">
    <property type="entry name" value="RNGDIOXGNASE"/>
</dbReference>
<dbReference type="SUPFAM" id="SSF55961">
    <property type="entry name" value="Bet v1-like"/>
    <property type="match status" value="1"/>
</dbReference>
<dbReference type="SUPFAM" id="SSF50022">
    <property type="entry name" value="ISP domain"/>
    <property type="match status" value="1"/>
</dbReference>
<dbReference type="PROSITE" id="PS51296">
    <property type="entry name" value="RIESKE"/>
    <property type="match status" value="1"/>
</dbReference>
<dbReference type="PROSITE" id="PS00570">
    <property type="entry name" value="RING_HYDROXYL_ALPHA"/>
    <property type="match status" value="1"/>
</dbReference>
<proteinExistence type="evidence at protein level"/>
<sequence length="471" mass="53936">MTARNLAEWQNFVQGCIDFRPNDGVYRIARDMFTEPELFELEMELIFEKVWIYACHESEIPNNNDFVTVQIGRQPMIVSRDGKGELHAMVNACEHRGATLTRVAKGNQSVFTCPFHAWCYKSDGRLVKVKAPGEYCEDFDKSSRGLKQGRIASYRGFVFVSLDTQATDSLEDFLGDAKVFLDLMVDQSPTGELEVLQGKSAYTFAGNWKLQNENGLDGYHVSTVHYNYVSTVQHRQQVNAAKGDELDTLDYSKLGAGDSETDDGWFSFKNGHSVLFSDMPNPTVRPGYNTVMPYLVEKFGEKRAEWAMHRLRNLNLYPSLFFMDQISSQLRIIRPVAWNKTEVISQCIGVKGESSEARRNRIRQFEDFFNVSGLGTPDDLVEFREQQKGFQGRIERWSDISRGYHQWTYGPTQNSQDLGIEPVITGREFTHEGLYVNQHGQWQRLILDGLNKKALKMHDVTFDNQSVMDEV</sequence>
<accession>O85673</accession>
<gene>
    <name evidence="10" type="primary">antA</name>
    <name type="ordered locus">ACIAD2669</name>
</gene>